<gene>
    <name evidence="1" type="primary">gcvH</name>
    <name type="ordered locus">A1S_1532</name>
</gene>
<reference key="1">
    <citation type="journal article" date="2007" name="Genes Dev.">
        <title>New insights into Acinetobacter baumannii pathogenesis revealed by high-density pyrosequencing and transposon mutagenesis.</title>
        <authorList>
            <person name="Smith M.G."/>
            <person name="Gianoulis T.A."/>
            <person name="Pukatzki S."/>
            <person name="Mekalanos J.J."/>
            <person name="Ornston L.N."/>
            <person name="Gerstein M."/>
            <person name="Snyder M."/>
        </authorList>
    </citation>
    <scope>NUCLEOTIDE SEQUENCE [LARGE SCALE GENOMIC DNA]</scope>
    <source>
        <strain>ATCC 17978 / DSM 105126 / CIP 53.77 / LMG 1025 / NCDC KC755 / 5377</strain>
    </source>
</reference>
<proteinExistence type="inferred from homology"/>
<accession>A3M4W5</accession>
<organism>
    <name type="scientific">Acinetobacter baumannii (strain ATCC 17978 / DSM 105126 / CIP 53.77 / LMG 1025 / NCDC KC755 / 5377)</name>
    <dbReference type="NCBI Taxonomy" id="400667"/>
    <lineage>
        <taxon>Bacteria</taxon>
        <taxon>Pseudomonadati</taxon>
        <taxon>Pseudomonadota</taxon>
        <taxon>Gammaproteobacteria</taxon>
        <taxon>Moraxellales</taxon>
        <taxon>Moraxellaceae</taxon>
        <taxon>Acinetobacter</taxon>
        <taxon>Acinetobacter calcoaceticus/baumannii complex</taxon>
    </lineage>
</organism>
<dbReference type="EMBL" id="CP000521">
    <property type="protein sequence ID" value="ABO11959.2"/>
    <property type="molecule type" value="Genomic_DNA"/>
</dbReference>
<dbReference type="RefSeq" id="WP_001016343.1">
    <property type="nucleotide sequence ID" value="NZ_CP053098.1"/>
</dbReference>
<dbReference type="SMR" id="A3M4W5"/>
<dbReference type="GeneID" id="92893760"/>
<dbReference type="KEGG" id="acb:A1S_1532"/>
<dbReference type="HOGENOM" id="CLU_097408_2_0_6"/>
<dbReference type="GO" id="GO:0005829">
    <property type="term" value="C:cytosol"/>
    <property type="evidence" value="ECO:0007669"/>
    <property type="project" value="TreeGrafter"/>
</dbReference>
<dbReference type="GO" id="GO:0005960">
    <property type="term" value="C:glycine cleavage complex"/>
    <property type="evidence" value="ECO:0007669"/>
    <property type="project" value="InterPro"/>
</dbReference>
<dbReference type="GO" id="GO:0019464">
    <property type="term" value="P:glycine decarboxylation via glycine cleavage system"/>
    <property type="evidence" value="ECO:0007669"/>
    <property type="project" value="UniProtKB-UniRule"/>
</dbReference>
<dbReference type="CDD" id="cd06848">
    <property type="entry name" value="GCS_H"/>
    <property type="match status" value="1"/>
</dbReference>
<dbReference type="Gene3D" id="2.40.50.100">
    <property type="match status" value="1"/>
</dbReference>
<dbReference type="HAMAP" id="MF_00272">
    <property type="entry name" value="GcvH"/>
    <property type="match status" value="1"/>
</dbReference>
<dbReference type="InterPro" id="IPR003016">
    <property type="entry name" value="2-oxoA_DH_lipoyl-BS"/>
</dbReference>
<dbReference type="InterPro" id="IPR000089">
    <property type="entry name" value="Biotin_lipoyl"/>
</dbReference>
<dbReference type="InterPro" id="IPR002930">
    <property type="entry name" value="GCV_H"/>
</dbReference>
<dbReference type="InterPro" id="IPR033753">
    <property type="entry name" value="GCV_H/Fam206"/>
</dbReference>
<dbReference type="InterPro" id="IPR017453">
    <property type="entry name" value="GCV_H_sub"/>
</dbReference>
<dbReference type="InterPro" id="IPR011053">
    <property type="entry name" value="Single_hybrid_motif"/>
</dbReference>
<dbReference type="NCBIfam" id="TIGR00527">
    <property type="entry name" value="gcvH"/>
    <property type="match status" value="1"/>
</dbReference>
<dbReference type="NCBIfam" id="NF002270">
    <property type="entry name" value="PRK01202.1"/>
    <property type="match status" value="1"/>
</dbReference>
<dbReference type="PANTHER" id="PTHR11715">
    <property type="entry name" value="GLYCINE CLEAVAGE SYSTEM H PROTEIN"/>
    <property type="match status" value="1"/>
</dbReference>
<dbReference type="PANTHER" id="PTHR11715:SF3">
    <property type="entry name" value="GLYCINE CLEAVAGE SYSTEM H PROTEIN-RELATED"/>
    <property type="match status" value="1"/>
</dbReference>
<dbReference type="Pfam" id="PF01597">
    <property type="entry name" value="GCV_H"/>
    <property type="match status" value="1"/>
</dbReference>
<dbReference type="SUPFAM" id="SSF51230">
    <property type="entry name" value="Single hybrid motif"/>
    <property type="match status" value="1"/>
</dbReference>
<dbReference type="PROSITE" id="PS50968">
    <property type="entry name" value="BIOTINYL_LIPOYL"/>
    <property type="match status" value="1"/>
</dbReference>
<dbReference type="PROSITE" id="PS00189">
    <property type="entry name" value="LIPOYL"/>
    <property type="match status" value="1"/>
</dbReference>
<feature type="chain" id="PRO_1000114492" description="Glycine cleavage system H protein">
    <location>
        <begin position="1"/>
        <end position="124"/>
    </location>
</feature>
<feature type="domain" description="Lipoyl-binding" evidence="2">
    <location>
        <begin position="22"/>
        <end position="104"/>
    </location>
</feature>
<feature type="modified residue" description="N6-lipoyllysine" evidence="1">
    <location>
        <position position="63"/>
    </location>
</feature>
<evidence type="ECO:0000255" key="1">
    <source>
        <dbReference type="HAMAP-Rule" id="MF_00272"/>
    </source>
</evidence>
<evidence type="ECO:0000255" key="2">
    <source>
        <dbReference type="PROSITE-ProRule" id="PRU01066"/>
    </source>
</evidence>
<keyword id="KW-0450">Lipoyl</keyword>
<comment type="function">
    <text evidence="1">The glycine cleavage system catalyzes the degradation of glycine. The H protein shuttles the methylamine group of glycine from the P protein to the T protein.</text>
</comment>
<comment type="cofactor">
    <cofactor evidence="1">
        <name>(R)-lipoate</name>
        <dbReference type="ChEBI" id="CHEBI:83088"/>
    </cofactor>
    <text evidence="1">Binds 1 lipoyl cofactor covalently.</text>
</comment>
<comment type="subunit">
    <text evidence="1">The glycine cleavage system is composed of four proteins: P, T, L and H.</text>
</comment>
<comment type="similarity">
    <text evidence="1">Belongs to the GcvH family.</text>
</comment>
<sequence>MNHPSELKYARTHEWVKIEGDLVITGITDHAQDELGDLVYVETPEVGSQVTAGEQAGVVESVKTASDIHAPVSGTVVEVNTDLEDDPDFVNEDPYGKGWIYKIKPDNIADVEKLLTNAEYEAGL</sequence>
<protein>
    <recommendedName>
        <fullName evidence="1">Glycine cleavage system H protein</fullName>
    </recommendedName>
</protein>
<name>GCSH_ACIBT</name>